<name>CISH_CHICK</name>
<proteinExistence type="evidence at transcript level"/>
<reference key="1">
    <citation type="journal article" date="2000" name="Oncogene">
        <title>Identification and characterization of genes upregulated in cells transformed by v-Jun.</title>
        <authorList>
            <person name="Fu S.-L."/>
            <person name="Waha A."/>
            <person name="Vogt P.K."/>
        </authorList>
    </citation>
    <scope>NUCLEOTIDE SEQUENCE [MRNA]</scope>
    <source>
        <strain>White leghorn</strain>
    </source>
</reference>
<organism>
    <name type="scientific">Gallus gallus</name>
    <name type="common">Chicken</name>
    <dbReference type="NCBI Taxonomy" id="9031"/>
    <lineage>
        <taxon>Eukaryota</taxon>
        <taxon>Metazoa</taxon>
        <taxon>Chordata</taxon>
        <taxon>Craniata</taxon>
        <taxon>Vertebrata</taxon>
        <taxon>Euteleostomi</taxon>
        <taxon>Archelosauria</taxon>
        <taxon>Archosauria</taxon>
        <taxon>Dinosauria</taxon>
        <taxon>Saurischia</taxon>
        <taxon>Theropoda</taxon>
        <taxon>Coelurosauria</taxon>
        <taxon>Aves</taxon>
        <taxon>Neognathae</taxon>
        <taxon>Galloanserae</taxon>
        <taxon>Galliformes</taxon>
        <taxon>Phasianidae</taxon>
        <taxon>Phasianinae</taxon>
        <taxon>Gallus</taxon>
    </lineage>
</organism>
<keyword id="KW-0341">Growth regulation</keyword>
<keyword id="KW-1185">Reference proteome</keyword>
<keyword id="KW-0727">SH2 domain</keyword>
<keyword id="KW-0734">Signal transduction inhibitor</keyword>
<keyword id="KW-0833">Ubl conjugation pathway</keyword>
<feature type="chain" id="PRO_0000181234" description="Cytokine-inducible SH2-containing protein">
    <location>
        <begin position="1"/>
        <end position="249"/>
    </location>
</feature>
<feature type="domain" description="SH2" evidence="2">
    <location>
        <begin position="84"/>
        <end position="165"/>
    </location>
</feature>
<feature type="domain" description="SOCS box" evidence="3">
    <location>
        <begin position="200"/>
        <end position="248"/>
    </location>
</feature>
<feature type="region of interest" description="Disordered" evidence="4">
    <location>
        <begin position="41"/>
        <end position="64"/>
    </location>
</feature>
<sequence length="249" mass="28118">MILCVPGPHPLLAEEKIQRLSLRGIAEDLTEHIMQPLPVPAFPEEPAPTFAAPEPDGSAPQTRDPEEDLLCIAKTFSYLRESGWYWGSITASEAKQHLQKMPEGTFLVRDSTHPSYLFTLSVKTNRGPTNVRIEYADSKFRLDSNYLSKPRILAFPDVVSLIQHYVTSCTTESKSEAPYPPPAPLPPVQKEVAVAAVHLKLLRPLGRRDSIPSLQHLCRLRINRCTTEVERLPLPRRMGDYLKQYPFQL</sequence>
<evidence type="ECO:0000250" key="1"/>
<evidence type="ECO:0000255" key="2">
    <source>
        <dbReference type="PROSITE-ProRule" id="PRU00191"/>
    </source>
</evidence>
<evidence type="ECO:0000255" key="3">
    <source>
        <dbReference type="PROSITE-ProRule" id="PRU00194"/>
    </source>
</evidence>
<evidence type="ECO:0000256" key="4">
    <source>
        <dbReference type="SAM" id="MobiDB-lite"/>
    </source>
</evidence>
<dbReference type="EMBL" id="AF167297">
    <property type="protein sequence ID" value="AAD46657.1"/>
    <property type="molecule type" value="mRNA"/>
</dbReference>
<dbReference type="RefSeq" id="NP_989957.1">
    <property type="nucleotide sequence ID" value="NM_204626.1"/>
</dbReference>
<dbReference type="SMR" id="Q9PW70"/>
<dbReference type="FunCoup" id="Q9PW70">
    <property type="interactions" value="874"/>
</dbReference>
<dbReference type="STRING" id="9031.ENSGALP00000003536"/>
<dbReference type="PaxDb" id="9031-ENSGALP00000003536"/>
<dbReference type="GeneID" id="395335"/>
<dbReference type="KEGG" id="gga:395335"/>
<dbReference type="CTD" id="1154"/>
<dbReference type="VEuPathDB" id="HostDB:geneid_395335"/>
<dbReference type="eggNOG" id="KOG4566">
    <property type="taxonomic scope" value="Eukaryota"/>
</dbReference>
<dbReference type="HOGENOM" id="CLU_079452_4_1_1"/>
<dbReference type="InParanoid" id="Q9PW70"/>
<dbReference type="OrthoDB" id="10063348at2759"/>
<dbReference type="PhylomeDB" id="Q9PW70"/>
<dbReference type="UniPathway" id="UPA00143"/>
<dbReference type="PRO" id="PR:Q9PW70"/>
<dbReference type="Proteomes" id="UP000000539">
    <property type="component" value="Unassembled WGS sequence"/>
</dbReference>
<dbReference type="GO" id="GO:0005126">
    <property type="term" value="F:cytokine receptor binding"/>
    <property type="evidence" value="ECO:0000318"/>
    <property type="project" value="GO_Central"/>
</dbReference>
<dbReference type="GO" id="GO:0019221">
    <property type="term" value="P:cytokine-mediated signaling pathway"/>
    <property type="evidence" value="ECO:0000318"/>
    <property type="project" value="GO_Central"/>
</dbReference>
<dbReference type="GO" id="GO:0035556">
    <property type="term" value="P:intracellular signal transduction"/>
    <property type="evidence" value="ECO:0007669"/>
    <property type="project" value="InterPro"/>
</dbReference>
<dbReference type="GO" id="GO:0046426">
    <property type="term" value="P:negative regulation of receptor signaling pathway via JAK-STAT"/>
    <property type="evidence" value="ECO:0000318"/>
    <property type="project" value="GO_Central"/>
</dbReference>
<dbReference type="GO" id="GO:0016567">
    <property type="term" value="P:protein ubiquitination"/>
    <property type="evidence" value="ECO:0007669"/>
    <property type="project" value="UniProtKB-UniPathway"/>
</dbReference>
<dbReference type="CDD" id="cd10718">
    <property type="entry name" value="SH2_CIS"/>
    <property type="match status" value="1"/>
</dbReference>
<dbReference type="CDD" id="cd03734">
    <property type="entry name" value="SOCS_CIS1"/>
    <property type="match status" value="1"/>
</dbReference>
<dbReference type="FunFam" id="3.30.505.10:FF:000042">
    <property type="entry name" value="Cytokine-inducible SH2-containing protein b"/>
    <property type="match status" value="1"/>
</dbReference>
<dbReference type="FunFam" id="1.10.750.20:FF:000002">
    <property type="entry name" value="Suppressor of cytokine signaling 2"/>
    <property type="match status" value="1"/>
</dbReference>
<dbReference type="Gene3D" id="3.30.505.10">
    <property type="entry name" value="SH2 domain"/>
    <property type="match status" value="1"/>
</dbReference>
<dbReference type="Gene3D" id="1.10.750.20">
    <property type="entry name" value="SOCS box"/>
    <property type="match status" value="1"/>
</dbReference>
<dbReference type="InterPro" id="IPR035887">
    <property type="entry name" value="CIS_SH2"/>
</dbReference>
<dbReference type="InterPro" id="IPR000980">
    <property type="entry name" value="SH2"/>
</dbReference>
<dbReference type="InterPro" id="IPR036860">
    <property type="entry name" value="SH2_dom_sf"/>
</dbReference>
<dbReference type="InterPro" id="IPR001496">
    <property type="entry name" value="SOCS_box"/>
</dbReference>
<dbReference type="InterPro" id="IPR036036">
    <property type="entry name" value="SOCS_box-like_dom_sf"/>
</dbReference>
<dbReference type="PANTHER" id="PTHR10155:SF9">
    <property type="entry name" value="CYTOKINE-INDUCIBLE SH2-CONTAINING PROTEIN"/>
    <property type="match status" value="1"/>
</dbReference>
<dbReference type="PANTHER" id="PTHR10155">
    <property type="entry name" value="PHOSPHATIDYLINOSITOL 3-KINASE REGULATORY SUBUNIT"/>
    <property type="match status" value="1"/>
</dbReference>
<dbReference type="Pfam" id="PF00017">
    <property type="entry name" value="SH2"/>
    <property type="match status" value="1"/>
</dbReference>
<dbReference type="Pfam" id="PF07525">
    <property type="entry name" value="SOCS_box"/>
    <property type="match status" value="1"/>
</dbReference>
<dbReference type="PRINTS" id="PR00401">
    <property type="entry name" value="SH2DOMAIN"/>
</dbReference>
<dbReference type="SMART" id="SM00252">
    <property type="entry name" value="SH2"/>
    <property type="match status" value="1"/>
</dbReference>
<dbReference type="SMART" id="SM00253">
    <property type="entry name" value="SOCS"/>
    <property type="match status" value="1"/>
</dbReference>
<dbReference type="SMART" id="SM00969">
    <property type="entry name" value="SOCS_box"/>
    <property type="match status" value="1"/>
</dbReference>
<dbReference type="SUPFAM" id="SSF55550">
    <property type="entry name" value="SH2 domain"/>
    <property type="match status" value="1"/>
</dbReference>
<dbReference type="SUPFAM" id="SSF158235">
    <property type="entry name" value="SOCS box-like"/>
    <property type="match status" value="1"/>
</dbReference>
<dbReference type="PROSITE" id="PS50001">
    <property type="entry name" value="SH2"/>
    <property type="match status" value="1"/>
</dbReference>
<dbReference type="PROSITE" id="PS50225">
    <property type="entry name" value="SOCS"/>
    <property type="match status" value="1"/>
</dbReference>
<gene>
    <name type="primary">CISH</name>
    <name type="synonym">CIS</name>
</gene>
<comment type="function">
    <text evidence="1">SOCS family proteins form part of a classical negative feedback system that regulates cytokine signal transduction. CIS is involved in the negative regulation of cytokines that signal through the JAK-STAT5 pathway such as erythropoietin, prolactin and interleukin 3 (IL3) receptor. Inhibits STAT5 trans-activation by suppressing its tyrosine phosphorylation. May be a substrate-recognition component of a SCF-like ECS (Elongin BC-CUL2/5-SOCS-box protein) E3 ubiquitin-protein ligase complex which mediates the ubiquitination and subsequent proteasomal degradation of target proteins (By similarity).</text>
</comment>
<comment type="pathway">
    <text>Protein modification; protein ubiquitination.</text>
</comment>
<comment type="domain">
    <text evidence="1">The SOCS box domain mediates the interaction with the Elongin BC complex, an adapter module in different E3 ubiquitin ligase complexes.</text>
</comment>
<protein>
    <recommendedName>
        <fullName>Cytokine-inducible SH2-containing protein</fullName>
        <shortName>CIS</shortName>
    </recommendedName>
    <alternativeName>
        <fullName>CIS-1</fullName>
    </alternativeName>
    <alternativeName>
        <fullName>Suppressor of cytokine signaling</fullName>
        <shortName>SOCS</shortName>
    </alternativeName>
</protein>
<accession>Q9PW70</accession>